<comment type="function">
    <text evidence="1">Specifically catalyzes the dephosphorylation of 2-phosphoglycolate. Is involved in the dissimilation of the intracellular 2-phosphoglycolate formed during the DNA repair of 3'-phosphoglycolate ends, a major class of DNA lesions induced by oxidative stress.</text>
</comment>
<comment type="catalytic activity">
    <reaction evidence="1">
        <text>2-phosphoglycolate + H2O = glycolate + phosphate</text>
        <dbReference type="Rhea" id="RHEA:14369"/>
        <dbReference type="ChEBI" id="CHEBI:15377"/>
        <dbReference type="ChEBI" id="CHEBI:29805"/>
        <dbReference type="ChEBI" id="CHEBI:43474"/>
        <dbReference type="ChEBI" id="CHEBI:58033"/>
        <dbReference type="EC" id="3.1.3.18"/>
    </reaction>
</comment>
<comment type="cofactor">
    <cofactor evidence="1">
        <name>Mg(2+)</name>
        <dbReference type="ChEBI" id="CHEBI:18420"/>
    </cofactor>
</comment>
<comment type="pathway">
    <text evidence="1">Organic acid metabolism; glycolate biosynthesis; glycolate from 2-phosphoglycolate: step 1/1.</text>
</comment>
<comment type="similarity">
    <text evidence="1">Belongs to the HAD-like hydrolase superfamily. CbbY/CbbZ/Gph/YieH family.</text>
</comment>
<feature type="chain" id="PRO_0000238170" description="Phosphoglycolate phosphatase">
    <location>
        <begin position="1"/>
        <end position="272"/>
    </location>
</feature>
<feature type="active site" description="Nucleophile" evidence="1">
    <location>
        <position position="19"/>
    </location>
</feature>
<feature type="binding site" evidence="1">
    <location>
        <position position="19"/>
    </location>
    <ligand>
        <name>Mg(2+)</name>
        <dbReference type="ChEBI" id="CHEBI:18420"/>
    </ligand>
</feature>
<feature type="binding site" evidence="1">
    <location>
        <position position="21"/>
    </location>
    <ligand>
        <name>Mg(2+)</name>
        <dbReference type="ChEBI" id="CHEBI:18420"/>
    </ligand>
</feature>
<feature type="binding site" evidence="1">
    <location>
        <position position="182"/>
    </location>
    <ligand>
        <name>Mg(2+)</name>
        <dbReference type="ChEBI" id="CHEBI:18420"/>
    </ligand>
</feature>
<evidence type="ECO:0000255" key="1">
    <source>
        <dbReference type="HAMAP-Rule" id="MF_00495"/>
    </source>
</evidence>
<accession>Q4ZMI2</accession>
<reference key="1">
    <citation type="journal article" date="2005" name="Proc. Natl. Acad. Sci. U.S.A.">
        <title>Comparison of the complete genome sequences of Pseudomonas syringae pv. syringae B728a and pv. tomato DC3000.</title>
        <authorList>
            <person name="Feil H."/>
            <person name="Feil W.S."/>
            <person name="Chain P."/>
            <person name="Larimer F."/>
            <person name="Dibartolo G."/>
            <person name="Copeland A."/>
            <person name="Lykidis A."/>
            <person name="Trong S."/>
            <person name="Nolan M."/>
            <person name="Goltsman E."/>
            <person name="Thiel J."/>
            <person name="Malfatti S."/>
            <person name="Loper J.E."/>
            <person name="Lapidus A."/>
            <person name="Detter J.C."/>
            <person name="Land M."/>
            <person name="Richardson P.M."/>
            <person name="Kyrpides N.C."/>
            <person name="Ivanova N."/>
            <person name="Lindow S.E."/>
        </authorList>
    </citation>
    <scope>NUCLEOTIDE SEQUENCE [LARGE SCALE GENOMIC DNA]</scope>
    <source>
        <strain>B728a</strain>
    </source>
</reference>
<proteinExistence type="inferred from homology"/>
<name>GPH_PSEU2</name>
<dbReference type="EC" id="3.1.3.18" evidence="1"/>
<dbReference type="EMBL" id="CP000075">
    <property type="protein sequence ID" value="AAY39640.1"/>
    <property type="molecule type" value="Genomic_DNA"/>
</dbReference>
<dbReference type="RefSeq" id="WP_003402021.1">
    <property type="nucleotide sequence ID" value="NC_007005.1"/>
</dbReference>
<dbReference type="RefSeq" id="YP_237678.1">
    <property type="nucleotide sequence ID" value="NC_007005.1"/>
</dbReference>
<dbReference type="SMR" id="Q4ZMI2"/>
<dbReference type="STRING" id="205918.Psyr_4610"/>
<dbReference type="KEGG" id="psb:Psyr_4610"/>
<dbReference type="PATRIC" id="fig|205918.7.peg.4755"/>
<dbReference type="eggNOG" id="COG0546">
    <property type="taxonomic scope" value="Bacteria"/>
</dbReference>
<dbReference type="HOGENOM" id="CLU_045011_19_1_6"/>
<dbReference type="OrthoDB" id="9776368at2"/>
<dbReference type="UniPathway" id="UPA00865">
    <property type="reaction ID" value="UER00834"/>
</dbReference>
<dbReference type="Proteomes" id="UP000000426">
    <property type="component" value="Chromosome"/>
</dbReference>
<dbReference type="GO" id="GO:0005829">
    <property type="term" value="C:cytosol"/>
    <property type="evidence" value="ECO:0007669"/>
    <property type="project" value="TreeGrafter"/>
</dbReference>
<dbReference type="GO" id="GO:0046872">
    <property type="term" value="F:metal ion binding"/>
    <property type="evidence" value="ECO:0007669"/>
    <property type="project" value="UniProtKB-KW"/>
</dbReference>
<dbReference type="GO" id="GO:0008967">
    <property type="term" value="F:phosphoglycolate phosphatase activity"/>
    <property type="evidence" value="ECO:0007669"/>
    <property type="project" value="UniProtKB-UniRule"/>
</dbReference>
<dbReference type="GO" id="GO:0005975">
    <property type="term" value="P:carbohydrate metabolic process"/>
    <property type="evidence" value="ECO:0007669"/>
    <property type="project" value="InterPro"/>
</dbReference>
<dbReference type="GO" id="GO:0006281">
    <property type="term" value="P:DNA repair"/>
    <property type="evidence" value="ECO:0007669"/>
    <property type="project" value="TreeGrafter"/>
</dbReference>
<dbReference type="GO" id="GO:0046295">
    <property type="term" value="P:glycolate biosynthetic process"/>
    <property type="evidence" value="ECO:0007669"/>
    <property type="project" value="UniProtKB-UniRule"/>
</dbReference>
<dbReference type="CDD" id="cd16417">
    <property type="entry name" value="HAD_PGPase"/>
    <property type="match status" value="1"/>
</dbReference>
<dbReference type="FunFam" id="3.40.50.1000:FF:000022">
    <property type="entry name" value="Phosphoglycolate phosphatase"/>
    <property type="match status" value="1"/>
</dbReference>
<dbReference type="Gene3D" id="3.40.50.1000">
    <property type="entry name" value="HAD superfamily/HAD-like"/>
    <property type="match status" value="1"/>
</dbReference>
<dbReference type="Gene3D" id="1.10.150.240">
    <property type="entry name" value="Putative phosphatase, domain 2"/>
    <property type="match status" value="1"/>
</dbReference>
<dbReference type="HAMAP" id="MF_00495">
    <property type="entry name" value="GPH_hydrolase_bact"/>
    <property type="match status" value="1"/>
</dbReference>
<dbReference type="InterPro" id="IPR050155">
    <property type="entry name" value="HAD-like_hydrolase_sf"/>
</dbReference>
<dbReference type="InterPro" id="IPR036412">
    <property type="entry name" value="HAD-like_sf"/>
</dbReference>
<dbReference type="InterPro" id="IPR006439">
    <property type="entry name" value="HAD-SF_hydro_IA"/>
</dbReference>
<dbReference type="InterPro" id="IPR041492">
    <property type="entry name" value="HAD_2"/>
</dbReference>
<dbReference type="InterPro" id="IPR023214">
    <property type="entry name" value="HAD_sf"/>
</dbReference>
<dbReference type="InterPro" id="IPR023198">
    <property type="entry name" value="PGP-like_dom2"/>
</dbReference>
<dbReference type="InterPro" id="IPR037512">
    <property type="entry name" value="PGPase_prok"/>
</dbReference>
<dbReference type="NCBIfam" id="TIGR01549">
    <property type="entry name" value="HAD-SF-IA-v1"/>
    <property type="match status" value="1"/>
</dbReference>
<dbReference type="NCBIfam" id="TIGR01509">
    <property type="entry name" value="HAD-SF-IA-v3"/>
    <property type="match status" value="1"/>
</dbReference>
<dbReference type="NCBIfam" id="TIGR01449">
    <property type="entry name" value="PGP_bact"/>
    <property type="match status" value="1"/>
</dbReference>
<dbReference type="NCBIfam" id="NF009695">
    <property type="entry name" value="PRK13222.1-2"/>
    <property type="match status" value="1"/>
</dbReference>
<dbReference type="NCBIfam" id="NF009698">
    <property type="entry name" value="PRK13223.1"/>
    <property type="match status" value="1"/>
</dbReference>
<dbReference type="PANTHER" id="PTHR43434">
    <property type="entry name" value="PHOSPHOGLYCOLATE PHOSPHATASE"/>
    <property type="match status" value="1"/>
</dbReference>
<dbReference type="PANTHER" id="PTHR43434:SF1">
    <property type="entry name" value="PHOSPHOGLYCOLATE PHOSPHATASE"/>
    <property type="match status" value="1"/>
</dbReference>
<dbReference type="Pfam" id="PF13419">
    <property type="entry name" value="HAD_2"/>
    <property type="match status" value="1"/>
</dbReference>
<dbReference type="PRINTS" id="PR00413">
    <property type="entry name" value="HADHALOGNASE"/>
</dbReference>
<dbReference type="SFLD" id="SFLDG01135">
    <property type="entry name" value="C1.5.6:_HAD__Beta-PGM__Phospha"/>
    <property type="match status" value="1"/>
</dbReference>
<dbReference type="SFLD" id="SFLDG01129">
    <property type="entry name" value="C1.5:_HAD__Beta-PGM__Phosphata"/>
    <property type="match status" value="1"/>
</dbReference>
<dbReference type="SUPFAM" id="SSF56784">
    <property type="entry name" value="HAD-like"/>
    <property type="match status" value="1"/>
</dbReference>
<organism>
    <name type="scientific">Pseudomonas syringae pv. syringae (strain B728a)</name>
    <dbReference type="NCBI Taxonomy" id="205918"/>
    <lineage>
        <taxon>Bacteria</taxon>
        <taxon>Pseudomonadati</taxon>
        <taxon>Pseudomonadota</taxon>
        <taxon>Gammaproteobacteria</taxon>
        <taxon>Pseudomonadales</taxon>
        <taxon>Pseudomonadaceae</taxon>
        <taxon>Pseudomonas</taxon>
        <taxon>Pseudomonas syringae</taxon>
    </lineage>
</organism>
<protein>
    <recommendedName>
        <fullName evidence="1">Phosphoglycolate phosphatase</fullName>
        <shortName evidence="1">PGP</shortName>
        <shortName evidence="1">PGPase</shortName>
        <ecNumber evidence="1">3.1.3.18</ecNumber>
    </recommendedName>
</protein>
<gene>
    <name type="ordered locus">Psyr_4610</name>
</gene>
<sequence>MSGFEQLFAGKLPKLIMFDLDGTLVDSVPDLAVAVDTMLAELGRPIAGLESVRAWVGNGAPVLVRRALANNLDHSGVDDALAEQGLEIFMRAYAQKHEFTVVYPGVRETLKWLQKMGVEMALITNKPERFVAPLLDEMKLGRFFRWIVGGDTMPQKKPDPAALFFVMKMAGAPASQSLFVGDSRSDVQAAKAAGVACVALSYGYNHGRPIAEENPAMVIDDLRKLIPGCLDMDAEILLPDIKRPSSRESIVVVTRKLWMKVIKALARWRWRA</sequence>
<keyword id="KW-0119">Carbohydrate metabolism</keyword>
<keyword id="KW-0378">Hydrolase</keyword>
<keyword id="KW-0460">Magnesium</keyword>
<keyword id="KW-0479">Metal-binding</keyword>